<feature type="initiator methionine" description="Removed" evidence="1">
    <location>
        <position position="1"/>
    </location>
</feature>
<feature type="chain" id="PRO_0000109205" description="UDP-N-acetylglucosamine--N-acetylmuramyl-(pentapeptide) pyrophosphoryl-undecaprenol N-acetylglucosamine transferase">
    <location>
        <begin position="2"/>
        <end position="355"/>
    </location>
</feature>
<feature type="binding site" evidence="2">
    <location>
        <begin position="15"/>
        <end position="17"/>
    </location>
    <ligand>
        <name>UDP-N-acetyl-alpha-D-glucosamine</name>
        <dbReference type="ChEBI" id="CHEBI:57705"/>
    </ligand>
</feature>
<feature type="binding site" evidence="2">
    <location>
        <position position="127"/>
    </location>
    <ligand>
        <name>UDP-N-acetyl-alpha-D-glucosamine</name>
        <dbReference type="ChEBI" id="CHEBI:57705"/>
    </ligand>
</feature>
<feature type="binding site" evidence="2">
    <location>
        <position position="163"/>
    </location>
    <ligand>
        <name>UDP-N-acetyl-alpha-D-glucosamine</name>
        <dbReference type="ChEBI" id="CHEBI:57705"/>
    </ligand>
</feature>
<feature type="binding site" evidence="2">
    <location>
        <position position="191"/>
    </location>
    <ligand>
        <name>UDP-N-acetyl-alpha-D-glucosamine</name>
        <dbReference type="ChEBI" id="CHEBI:57705"/>
    </ligand>
</feature>
<feature type="binding site" evidence="2">
    <location>
        <position position="244"/>
    </location>
    <ligand>
        <name>UDP-N-acetyl-alpha-D-glucosamine</name>
        <dbReference type="ChEBI" id="CHEBI:57705"/>
    </ligand>
</feature>
<feature type="binding site" evidence="2">
    <location>
        <begin position="263"/>
        <end position="268"/>
    </location>
    <ligand>
        <name>UDP-N-acetyl-alpha-D-glucosamine</name>
        <dbReference type="ChEBI" id="CHEBI:57705"/>
    </ligand>
</feature>
<feature type="binding site" evidence="2">
    <location>
        <position position="288"/>
    </location>
    <ligand>
        <name>UDP-N-acetyl-alpha-D-glucosamine</name>
        <dbReference type="ChEBI" id="CHEBI:57705"/>
    </ligand>
</feature>
<proteinExistence type="inferred from homology"/>
<reference key="1">
    <citation type="journal article" date="2001" name="Nature">
        <title>Complete genome sequence of a multiple drug resistant Salmonella enterica serovar Typhi CT18.</title>
        <authorList>
            <person name="Parkhill J."/>
            <person name="Dougan G."/>
            <person name="James K.D."/>
            <person name="Thomson N.R."/>
            <person name="Pickard D."/>
            <person name="Wain J."/>
            <person name="Churcher C.M."/>
            <person name="Mungall K.L."/>
            <person name="Bentley S.D."/>
            <person name="Holden M.T.G."/>
            <person name="Sebaihia M."/>
            <person name="Baker S."/>
            <person name="Basham D."/>
            <person name="Brooks K."/>
            <person name="Chillingworth T."/>
            <person name="Connerton P."/>
            <person name="Cronin A."/>
            <person name="Davis P."/>
            <person name="Davies R.M."/>
            <person name="Dowd L."/>
            <person name="White N."/>
            <person name="Farrar J."/>
            <person name="Feltwell T."/>
            <person name="Hamlin N."/>
            <person name="Haque A."/>
            <person name="Hien T.T."/>
            <person name="Holroyd S."/>
            <person name="Jagels K."/>
            <person name="Krogh A."/>
            <person name="Larsen T.S."/>
            <person name="Leather S."/>
            <person name="Moule S."/>
            <person name="O'Gaora P."/>
            <person name="Parry C."/>
            <person name="Quail M.A."/>
            <person name="Rutherford K.M."/>
            <person name="Simmonds M."/>
            <person name="Skelton J."/>
            <person name="Stevens K."/>
            <person name="Whitehead S."/>
            <person name="Barrell B.G."/>
        </authorList>
    </citation>
    <scope>NUCLEOTIDE SEQUENCE [LARGE SCALE GENOMIC DNA]</scope>
    <source>
        <strain>CT18</strain>
    </source>
</reference>
<reference key="2">
    <citation type="journal article" date="2003" name="J. Bacteriol.">
        <title>Comparative genomics of Salmonella enterica serovar Typhi strains Ty2 and CT18.</title>
        <authorList>
            <person name="Deng W."/>
            <person name="Liou S.-R."/>
            <person name="Plunkett G. III"/>
            <person name="Mayhew G.F."/>
            <person name="Rose D.J."/>
            <person name="Burland V."/>
            <person name="Kodoyianni V."/>
            <person name="Schwartz D.C."/>
            <person name="Blattner F.R."/>
        </authorList>
    </citation>
    <scope>NUCLEOTIDE SEQUENCE [LARGE SCALE GENOMIC DNA]</scope>
    <source>
        <strain>ATCC 700931 / Ty2</strain>
    </source>
</reference>
<dbReference type="EC" id="2.4.1.227" evidence="2"/>
<dbReference type="EMBL" id="AL513382">
    <property type="protein sequence ID" value="CAD01285.1"/>
    <property type="molecule type" value="Genomic_DNA"/>
</dbReference>
<dbReference type="EMBL" id="AE014613">
    <property type="protein sequence ID" value="AAO67864.1"/>
    <property type="molecule type" value="Genomic_DNA"/>
</dbReference>
<dbReference type="RefSeq" id="NP_454740.1">
    <property type="nucleotide sequence ID" value="NC_003198.1"/>
</dbReference>
<dbReference type="RefSeq" id="WP_000016622.1">
    <property type="nucleotide sequence ID" value="NZ_WSUR01000009.1"/>
</dbReference>
<dbReference type="SMR" id="Q8Z9G9"/>
<dbReference type="STRING" id="220341.gene:17584187"/>
<dbReference type="KEGG" id="stt:t0132"/>
<dbReference type="KEGG" id="sty:STY0148"/>
<dbReference type="PATRIC" id="fig|220341.7.peg.148"/>
<dbReference type="eggNOG" id="COG0707">
    <property type="taxonomic scope" value="Bacteria"/>
</dbReference>
<dbReference type="HOGENOM" id="CLU_037404_2_0_6"/>
<dbReference type="OMA" id="AADMMLC"/>
<dbReference type="OrthoDB" id="9808936at2"/>
<dbReference type="UniPathway" id="UPA00219"/>
<dbReference type="Proteomes" id="UP000000541">
    <property type="component" value="Chromosome"/>
</dbReference>
<dbReference type="Proteomes" id="UP000002670">
    <property type="component" value="Chromosome"/>
</dbReference>
<dbReference type="GO" id="GO:0005886">
    <property type="term" value="C:plasma membrane"/>
    <property type="evidence" value="ECO:0007669"/>
    <property type="project" value="UniProtKB-SubCell"/>
</dbReference>
<dbReference type="GO" id="GO:0051991">
    <property type="term" value="F:UDP-N-acetyl-D-glucosamine:N-acetylmuramoyl-L-alanyl-D-glutamyl-meso-2,6-diaminopimelyl-D-alanyl-D-alanine-diphosphoundecaprenol 4-beta-N-acetylglucosaminlytransferase activity"/>
    <property type="evidence" value="ECO:0007669"/>
    <property type="project" value="RHEA"/>
</dbReference>
<dbReference type="GO" id="GO:0050511">
    <property type="term" value="F:undecaprenyldiphospho-muramoylpentapeptide beta-N-acetylglucosaminyltransferase activity"/>
    <property type="evidence" value="ECO:0007669"/>
    <property type="project" value="UniProtKB-UniRule"/>
</dbReference>
<dbReference type="GO" id="GO:0005975">
    <property type="term" value="P:carbohydrate metabolic process"/>
    <property type="evidence" value="ECO:0007669"/>
    <property type="project" value="InterPro"/>
</dbReference>
<dbReference type="GO" id="GO:0051301">
    <property type="term" value="P:cell division"/>
    <property type="evidence" value="ECO:0007669"/>
    <property type="project" value="UniProtKB-KW"/>
</dbReference>
<dbReference type="GO" id="GO:0071555">
    <property type="term" value="P:cell wall organization"/>
    <property type="evidence" value="ECO:0007669"/>
    <property type="project" value="UniProtKB-KW"/>
</dbReference>
<dbReference type="GO" id="GO:0030259">
    <property type="term" value="P:lipid glycosylation"/>
    <property type="evidence" value="ECO:0007669"/>
    <property type="project" value="UniProtKB-UniRule"/>
</dbReference>
<dbReference type="GO" id="GO:0009252">
    <property type="term" value="P:peptidoglycan biosynthetic process"/>
    <property type="evidence" value="ECO:0007669"/>
    <property type="project" value="UniProtKB-UniRule"/>
</dbReference>
<dbReference type="GO" id="GO:0008360">
    <property type="term" value="P:regulation of cell shape"/>
    <property type="evidence" value="ECO:0007669"/>
    <property type="project" value="UniProtKB-KW"/>
</dbReference>
<dbReference type="CDD" id="cd03785">
    <property type="entry name" value="GT28_MurG"/>
    <property type="match status" value="1"/>
</dbReference>
<dbReference type="FunFam" id="3.40.50.2000:FF:000016">
    <property type="entry name" value="UDP-N-acetylglucosamine--N-acetylmuramyl-(pentapeptide) pyrophosphoryl-undecaprenol N-acetylglucosamine transferase"/>
    <property type="match status" value="1"/>
</dbReference>
<dbReference type="FunFam" id="3.40.50.2000:FF:000018">
    <property type="entry name" value="UDP-N-acetylglucosamine--N-acetylmuramyl-(pentapeptide) pyrophosphoryl-undecaprenol N-acetylglucosamine transferase"/>
    <property type="match status" value="1"/>
</dbReference>
<dbReference type="Gene3D" id="3.40.50.2000">
    <property type="entry name" value="Glycogen Phosphorylase B"/>
    <property type="match status" value="2"/>
</dbReference>
<dbReference type="HAMAP" id="MF_00033">
    <property type="entry name" value="MurG"/>
    <property type="match status" value="1"/>
</dbReference>
<dbReference type="InterPro" id="IPR006009">
    <property type="entry name" value="GlcNAc_MurG"/>
</dbReference>
<dbReference type="InterPro" id="IPR007235">
    <property type="entry name" value="Glyco_trans_28_C"/>
</dbReference>
<dbReference type="InterPro" id="IPR004276">
    <property type="entry name" value="GlycoTrans_28_N"/>
</dbReference>
<dbReference type="NCBIfam" id="TIGR01133">
    <property type="entry name" value="murG"/>
    <property type="match status" value="1"/>
</dbReference>
<dbReference type="PANTHER" id="PTHR21015:SF22">
    <property type="entry name" value="GLYCOSYLTRANSFERASE"/>
    <property type="match status" value="1"/>
</dbReference>
<dbReference type="PANTHER" id="PTHR21015">
    <property type="entry name" value="UDP-N-ACETYLGLUCOSAMINE--N-ACETYLMURAMYL-(PENTAPEPTIDE) PYROPHOSPHORYL-UNDECAPRENOL N-ACETYLGLUCOSAMINE TRANSFERASE 1"/>
    <property type="match status" value="1"/>
</dbReference>
<dbReference type="Pfam" id="PF04101">
    <property type="entry name" value="Glyco_tran_28_C"/>
    <property type="match status" value="1"/>
</dbReference>
<dbReference type="Pfam" id="PF03033">
    <property type="entry name" value="Glyco_transf_28"/>
    <property type="match status" value="1"/>
</dbReference>
<dbReference type="SUPFAM" id="SSF53756">
    <property type="entry name" value="UDP-Glycosyltransferase/glycogen phosphorylase"/>
    <property type="match status" value="1"/>
</dbReference>
<keyword id="KW-0131">Cell cycle</keyword>
<keyword id="KW-0132">Cell division</keyword>
<keyword id="KW-0997">Cell inner membrane</keyword>
<keyword id="KW-1003">Cell membrane</keyword>
<keyword id="KW-0133">Cell shape</keyword>
<keyword id="KW-0961">Cell wall biogenesis/degradation</keyword>
<keyword id="KW-0328">Glycosyltransferase</keyword>
<keyword id="KW-0472">Membrane</keyword>
<keyword id="KW-0573">Peptidoglycan synthesis</keyword>
<keyword id="KW-0808">Transferase</keyword>
<gene>
    <name evidence="2" type="primary">murG</name>
    <name type="ordered locus">STY0148</name>
    <name type="ordered locus">t0132</name>
</gene>
<sequence length="355" mass="37821">MSGQPKRLMVMAGGTGGHVFPGLAVAHHLMAQGWQVRWLGTSDRMEADLVPKHGIDIDFIRISGLRGKGVKALLAAPLRIFNAWRQARAIMKRFKPDVVLGMGGYVSGPGGLAAWSLGIPVVLHEQNGIAGLTNQWLAKIATTVMQAFPGAFPNAEVVGNPVRTDVLALPLPQVRLAGRDGPIRVLVVGGSQGARVLNQTMPQVAARLGDTVTIWHQSGKGAQLTVEQAYAGAGQPQHKVTEFIDGMAAAYAWADVVVCRSGALTVSEIAAAGLPAIFVPFQHKDRQQYWNALPLENAGAAKIFEQPQFTVEAVADTLAGWSREALLTMAERARAVSIPDATERVASEVSRVART</sequence>
<organism>
    <name type="scientific">Salmonella typhi</name>
    <dbReference type="NCBI Taxonomy" id="90370"/>
    <lineage>
        <taxon>Bacteria</taxon>
        <taxon>Pseudomonadati</taxon>
        <taxon>Pseudomonadota</taxon>
        <taxon>Gammaproteobacteria</taxon>
        <taxon>Enterobacterales</taxon>
        <taxon>Enterobacteriaceae</taxon>
        <taxon>Salmonella</taxon>
    </lineage>
</organism>
<accession>Q8Z9G9</accession>
<protein>
    <recommendedName>
        <fullName evidence="2">UDP-N-acetylglucosamine--N-acetylmuramyl-(pentapeptide) pyrophosphoryl-undecaprenol N-acetylglucosamine transferase</fullName>
        <ecNumber evidence="2">2.4.1.227</ecNumber>
    </recommendedName>
    <alternativeName>
        <fullName evidence="2">Undecaprenyl-PP-MurNAc-pentapeptide-UDPGlcNAc GlcNAc transferase</fullName>
    </alternativeName>
</protein>
<comment type="function">
    <text evidence="2">Cell wall formation. Catalyzes the transfer of a GlcNAc subunit on undecaprenyl-pyrophosphoryl-MurNAc-pentapeptide (lipid intermediate I) to form undecaprenyl-pyrophosphoryl-MurNAc-(pentapeptide)GlcNAc (lipid intermediate II).</text>
</comment>
<comment type="catalytic activity">
    <reaction evidence="2">
        <text>di-trans,octa-cis-undecaprenyl diphospho-N-acetyl-alpha-D-muramoyl-L-alanyl-D-glutamyl-meso-2,6-diaminopimeloyl-D-alanyl-D-alanine + UDP-N-acetyl-alpha-D-glucosamine = di-trans,octa-cis-undecaprenyl diphospho-[N-acetyl-alpha-D-glucosaminyl-(1-&gt;4)]-N-acetyl-alpha-D-muramoyl-L-alanyl-D-glutamyl-meso-2,6-diaminopimeloyl-D-alanyl-D-alanine + UDP + H(+)</text>
        <dbReference type="Rhea" id="RHEA:31227"/>
        <dbReference type="ChEBI" id="CHEBI:15378"/>
        <dbReference type="ChEBI" id="CHEBI:57705"/>
        <dbReference type="ChEBI" id="CHEBI:58223"/>
        <dbReference type="ChEBI" id="CHEBI:61387"/>
        <dbReference type="ChEBI" id="CHEBI:61388"/>
        <dbReference type="EC" id="2.4.1.227"/>
    </reaction>
</comment>
<comment type="pathway">
    <text evidence="2">Cell wall biogenesis; peptidoglycan biosynthesis.</text>
</comment>
<comment type="subcellular location">
    <subcellularLocation>
        <location evidence="2">Cell inner membrane</location>
        <topology evidence="2">Peripheral membrane protein</topology>
        <orientation evidence="2">Cytoplasmic side</orientation>
    </subcellularLocation>
</comment>
<comment type="similarity">
    <text evidence="2">Belongs to the glycosyltransferase 28 family. MurG subfamily.</text>
</comment>
<name>MURG_SALTI</name>
<evidence type="ECO:0000250" key="1"/>
<evidence type="ECO:0000255" key="2">
    <source>
        <dbReference type="HAMAP-Rule" id="MF_00033"/>
    </source>
</evidence>